<accession>Q61XD3</accession>
<accession>A8WW15</accession>
<feature type="chain" id="PRO_0000268639" description="Aurora/IPL1-related protein kinase 2">
    <location>
        <begin position="1"/>
        <end position="302"/>
    </location>
</feature>
<feature type="domain" description="Protein kinase" evidence="2">
    <location>
        <begin position="27"/>
        <end position="277"/>
    </location>
</feature>
<feature type="region of interest" description="Disordered" evidence="4">
    <location>
        <begin position="1"/>
        <end position="23"/>
    </location>
</feature>
<feature type="compositionally biased region" description="Polar residues" evidence="4">
    <location>
        <begin position="1"/>
        <end position="17"/>
    </location>
</feature>
<feature type="active site" description="Proton acceptor" evidence="2 3">
    <location>
        <position position="150"/>
    </location>
</feature>
<feature type="binding site" evidence="2">
    <location>
        <begin position="33"/>
        <end position="41"/>
    </location>
    <ligand>
        <name>ATP</name>
        <dbReference type="ChEBI" id="CHEBI:30616"/>
    </ligand>
</feature>
<feature type="binding site" evidence="2">
    <location>
        <position position="56"/>
    </location>
    <ligand>
        <name>ATP</name>
        <dbReference type="ChEBI" id="CHEBI:30616"/>
    </ligand>
</feature>
<reference key="1">
    <citation type="journal article" date="2003" name="PLoS Biol.">
        <title>The genome sequence of Caenorhabditis briggsae: a platform for comparative genomics.</title>
        <authorList>
            <person name="Stein L.D."/>
            <person name="Bao Z."/>
            <person name="Blasiar D."/>
            <person name="Blumenthal T."/>
            <person name="Brent M.R."/>
            <person name="Chen N."/>
            <person name="Chinwalla A."/>
            <person name="Clarke L."/>
            <person name="Clee C."/>
            <person name="Coghlan A."/>
            <person name="Coulson A."/>
            <person name="D'Eustachio P."/>
            <person name="Fitch D.H.A."/>
            <person name="Fulton L.A."/>
            <person name="Fulton R.E."/>
            <person name="Griffiths-Jones S."/>
            <person name="Harris T.W."/>
            <person name="Hillier L.W."/>
            <person name="Kamath R."/>
            <person name="Kuwabara P.E."/>
            <person name="Mardis E.R."/>
            <person name="Marra M.A."/>
            <person name="Miner T.L."/>
            <person name="Minx P."/>
            <person name="Mullikin J.C."/>
            <person name="Plumb R.W."/>
            <person name="Rogers J."/>
            <person name="Schein J.E."/>
            <person name="Sohrmann M."/>
            <person name="Spieth J."/>
            <person name="Stajich J.E."/>
            <person name="Wei C."/>
            <person name="Willey D."/>
            <person name="Wilson R.K."/>
            <person name="Durbin R.M."/>
            <person name="Waterston R.H."/>
        </authorList>
    </citation>
    <scope>NUCLEOTIDE SEQUENCE [LARGE SCALE GENOMIC DNA]</scope>
    <source>
        <strain>AF16</strain>
    </source>
</reference>
<comment type="function">
    <text evidence="1">Serine/threonine-protein kinase which mediates both meiotic and mitotic chromosome segregation. Required for histone H3 'Ser-10' phosphorylation. Phosphorylates tlk-1 and zen-4 (By similarity).</text>
</comment>
<comment type="catalytic activity">
    <reaction>
        <text>L-seryl-[protein] + ATP = O-phospho-L-seryl-[protein] + ADP + H(+)</text>
        <dbReference type="Rhea" id="RHEA:17989"/>
        <dbReference type="Rhea" id="RHEA-COMP:9863"/>
        <dbReference type="Rhea" id="RHEA-COMP:11604"/>
        <dbReference type="ChEBI" id="CHEBI:15378"/>
        <dbReference type="ChEBI" id="CHEBI:29999"/>
        <dbReference type="ChEBI" id="CHEBI:30616"/>
        <dbReference type="ChEBI" id="CHEBI:83421"/>
        <dbReference type="ChEBI" id="CHEBI:456216"/>
        <dbReference type="EC" id="2.7.11.1"/>
    </reaction>
</comment>
<comment type="catalytic activity">
    <reaction>
        <text>L-threonyl-[protein] + ATP = O-phospho-L-threonyl-[protein] + ADP + H(+)</text>
        <dbReference type="Rhea" id="RHEA:46608"/>
        <dbReference type="Rhea" id="RHEA-COMP:11060"/>
        <dbReference type="Rhea" id="RHEA-COMP:11605"/>
        <dbReference type="ChEBI" id="CHEBI:15378"/>
        <dbReference type="ChEBI" id="CHEBI:30013"/>
        <dbReference type="ChEBI" id="CHEBI:30616"/>
        <dbReference type="ChEBI" id="CHEBI:61977"/>
        <dbReference type="ChEBI" id="CHEBI:456216"/>
        <dbReference type="EC" id="2.7.11.1"/>
    </reaction>
</comment>
<comment type="subunit">
    <text evidence="1">Interacts with zen-4 and icp-1. Part of a complex containing at least air-2; icp-1; csc-1 and bir-1. Interacts with tlk-1 and bmk-1 (By similarity).</text>
</comment>
<comment type="subcellular location">
    <subcellularLocation>
        <location evidence="1">Cytoplasm</location>
        <location evidence="1">Cytoskeleton</location>
    </subcellularLocation>
    <subcellularLocation>
        <location evidence="1">Chromosome</location>
    </subcellularLocation>
    <subcellularLocation>
        <location evidence="1">Midbody</location>
    </subcellularLocation>
    <text evidence="1">Meiotic and mitotic chromosomes. During each division, relocates to the midbody microtubules (By similarity).</text>
</comment>
<comment type="similarity">
    <text evidence="2">Belongs to the protein kinase superfamily. Ser/Thr protein kinase family.</text>
</comment>
<protein>
    <recommendedName>
        <fullName>Aurora/IPL1-related protein kinase 2</fullName>
        <ecNumber>2.7.11.1</ecNumber>
    </recommendedName>
    <alternativeName>
        <fullName>Serine/threonine-protein kinase aurora-B</fullName>
    </alternativeName>
</protein>
<organism>
    <name type="scientific">Caenorhabditis briggsae</name>
    <dbReference type="NCBI Taxonomy" id="6238"/>
    <lineage>
        <taxon>Eukaryota</taxon>
        <taxon>Metazoa</taxon>
        <taxon>Ecdysozoa</taxon>
        <taxon>Nematoda</taxon>
        <taxon>Chromadorea</taxon>
        <taxon>Rhabditida</taxon>
        <taxon>Rhabditina</taxon>
        <taxon>Rhabditomorpha</taxon>
        <taxon>Rhabditoidea</taxon>
        <taxon>Rhabditidae</taxon>
        <taxon>Peloderinae</taxon>
        <taxon>Caenorhabditis</taxon>
    </lineage>
</organism>
<proteinExistence type="inferred from homology"/>
<keyword id="KW-0067">ATP-binding</keyword>
<keyword id="KW-0131">Cell cycle</keyword>
<keyword id="KW-0132">Cell division</keyword>
<keyword id="KW-0156">Chromatin regulator</keyword>
<keyword id="KW-0158">Chromosome</keyword>
<keyword id="KW-0159">Chromosome partition</keyword>
<keyword id="KW-0963">Cytoplasm</keyword>
<keyword id="KW-0206">Cytoskeleton</keyword>
<keyword id="KW-0217">Developmental protein</keyword>
<keyword id="KW-0418">Kinase</keyword>
<keyword id="KW-0469">Meiosis</keyword>
<keyword id="KW-0498">Mitosis</keyword>
<keyword id="KW-0547">Nucleotide-binding</keyword>
<keyword id="KW-1185">Reference proteome</keyword>
<keyword id="KW-0723">Serine/threonine-protein kinase</keyword>
<keyword id="KW-0808">Transferase</keyword>
<name>AIR2_CAEBR</name>
<dbReference type="EC" id="2.7.11.1"/>
<dbReference type="EMBL" id="HE600906">
    <property type="protein sequence ID" value="CAP24824.3"/>
    <property type="molecule type" value="Genomic_DNA"/>
</dbReference>
<dbReference type="SMR" id="Q61XD3"/>
<dbReference type="FunCoup" id="Q61XD3">
    <property type="interactions" value="869"/>
</dbReference>
<dbReference type="STRING" id="6238.Q61XD3"/>
<dbReference type="EnsemblMetazoa" id="CBG04030.1">
    <property type="protein sequence ID" value="CBG04030.1"/>
    <property type="gene ID" value="WBGene00026778"/>
</dbReference>
<dbReference type="KEGG" id="cbr:CBG_04030"/>
<dbReference type="CTD" id="8581430"/>
<dbReference type="WormBase" id="CBG04030">
    <property type="protein sequence ID" value="CBP01028"/>
    <property type="gene ID" value="WBGene00026778"/>
    <property type="gene designation" value="Cbr-air-2"/>
</dbReference>
<dbReference type="eggNOG" id="KOG0580">
    <property type="taxonomic scope" value="Eukaryota"/>
</dbReference>
<dbReference type="HOGENOM" id="CLU_000288_63_0_1"/>
<dbReference type="InParanoid" id="Q61XD3"/>
<dbReference type="OMA" id="PPFEHEN"/>
<dbReference type="Proteomes" id="UP000008549">
    <property type="component" value="Unassembled WGS sequence"/>
</dbReference>
<dbReference type="GO" id="GO:0005813">
    <property type="term" value="C:centrosome"/>
    <property type="evidence" value="ECO:0000318"/>
    <property type="project" value="GO_Central"/>
</dbReference>
<dbReference type="GO" id="GO:0032133">
    <property type="term" value="C:chromosome passenger complex"/>
    <property type="evidence" value="ECO:0000318"/>
    <property type="project" value="GO_Central"/>
</dbReference>
<dbReference type="GO" id="GO:0000794">
    <property type="term" value="C:condensed nuclear chromosome"/>
    <property type="evidence" value="ECO:0007669"/>
    <property type="project" value="EnsemblMetazoa"/>
</dbReference>
<dbReference type="GO" id="GO:0005737">
    <property type="term" value="C:cytoplasm"/>
    <property type="evidence" value="ECO:0007669"/>
    <property type="project" value="UniProtKB-KW"/>
</dbReference>
<dbReference type="GO" id="GO:0000776">
    <property type="term" value="C:kinetochore"/>
    <property type="evidence" value="ECO:0000318"/>
    <property type="project" value="GO_Central"/>
</dbReference>
<dbReference type="GO" id="GO:0030496">
    <property type="term" value="C:midbody"/>
    <property type="evidence" value="ECO:0007669"/>
    <property type="project" value="UniProtKB-SubCell"/>
</dbReference>
<dbReference type="GO" id="GO:0005634">
    <property type="term" value="C:nucleus"/>
    <property type="evidence" value="ECO:0000318"/>
    <property type="project" value="GO_Central"/>
</dbReference>
<dbReference type="GO" id="GO:0005876">
    <property type="term" value="C:spindle microtubule"/>
    <property type="evidence" value="ECO:0000318"/>
    <property type="project" value="GO_Central"/>
</dbReference>
<dbReference type="GO" id="GO:0051233">
    <property type="term" value="C:spindle midzone"/>
    <property type="evidence" value="ECO:0000318"/>
    <property type="project" value="GO_Central"/>
</dbReference>
<dbReference type="GO" id="GO:0000922">
    <property type="term" value="C:spindle pole"/>
    <property type="evidence" value="ECO:0000318"/>
    <property type="project" value="GO_Central"/>
</dbReference>
<dbReference type="GO" id="GO:0005524">
    <property type="term" value="F:ATP binding"/>
    <property type="evidence" value="ECO:0007669"/>
    <property type="project" value="UniProtKB-KW"/>
</dbReference>
<dbReference type="GO" id="GO:0051117">
    <property type="term" value="F:ATPase binding"/>
    <property type="evidence" value="ECO:0007669"/>
    <property type="project" value="EnsemblMetazoa"/>
</dbReference>
<dbReference type="GO" id="GO:0140996">
    <property type="term" value="F:histone H3 kinase activity"/>
    <property type="evidence" value="ECO:0007669"/>
    <property type="project" value="EnsemblMetazoa"/>
</dbReference>
<dbReference type="GO" id="GO:0019894">
    <property type="term" value="F:kinesin binding"/>
    <property type="evidence" value="ECO:0007669"/>
    <property type="project" value="EnsemblMetazoa"/>
</dbReference>
<dbReference type="GO" id="GO:0106310">
    <property type="term" value="F:protein serine kinase activity"/>
    <property type="evidence" value="ECO:0007669"/>
    <property type="project" value="RHEA"/>
</dbReference>
<dbReference type="GO" id="GO:0004674">
    <property type="term" value="F:protein serine/threonine kinase activity"/>
    <property type="evidence" value="ECO:0007669"/>
    <property type="project" value="UniProtKB-KW"/>
</dbReference>
<dbReference type="GO" id="GO:0030261">
    <property type="term" value="P:chromosome condensation"/>
    <property type="evidence" value="ECO:0007669"/>
    <property type="project" value="EnsemblMetazoa"/>
</dbReference>
<dbReference type="GO" id="GO:0045184">
    <property type="term" value="P:establishment of protein localization"/>
    <property type="evidence" value="ECO:0007669"/>
    <property type="project" value="EnsemblMetazoa"/>
</dbReference>
<dbReference type="GO" id="GO:0051257">
    <property type="term" value="P:meiotic spindle midzone assembly"/>
    <property type="evidence" value="ECO:0007669"/>
    <property type="project" value="EnsemblMetazoa"/>
</dbReference>
<dbReference type="GO" id="GO:0051256">
    <property type="term" value="P:mitotic spindle midzone assembly"/>
    <property type="evidence" value="ECO:0007669"/>
    <property type="project" value="EnsemblMetazoa"/>
</dbReference>
<dbReference type="GO" id="GO:0007052">
    <property type="term" value="P:mitotic spindle organization"/>
    <property type="evidence" value="ECO:0000318"/>
    <property type="project" value="GO_Central"/>
</dbReference>
<dbReference type="GO" id="GO:0031991">
    <property type="term" value="P:regulation of actomyosin contractile ring contraction"/>
    <property type="evidence" value="ECO:0007669"/>
    <property type="project" value="EnsemblMetazoa"/>
</dbReference>
<dbReference type="GO" id="GO:0032465">
    <property type="term" value="P:regulation of cytokinesis"/>
    <property type="evidence" value="ECO:0000318"/>
    <property type="project" value="GO_Central"/>
</dbReference>
<dbReference type="CDD" id="cd14007">
    <property type="entry name" value="STKc_Aurora"/>
    <property type="match status" value="1"/>
</dbReference>
<dbReference type="FunFam" id="3.30.200.20:FF:000042">
    <property type="entry name" value="Aurora kinase A"/>
    <property type="match status" value="1"/>
</dbReference>
<dbReference type="FunFam" id="1.10.510.10:FF:000235">
    <property type="entry name" value="Serine/threonine-protein kinase ark1"/>
    <property type="match status" value="1"/>
</dbReference>
<dbReference type="Gene3D" id="3.30.200.20">
    <property type="entry name" value="Phosphorylase Kinase, domain 1"/>
    <property type="match status" value="1"/>
</dbReference>
<dbReference type="Gene3D" id="1.10.510.10">
    <property type="entry name" value="Transferase(Phosphotransferase) domain 1"/>
    <property type="match status" value="1"/>
</dbReference>
<dbReference type="InterPro" id="IPR030616">
    <property type="entry name" value="Aur-like"/>
</dbReference>
<dbReference type="InterPro" id="IPR011009">
    <property type="entry name" value="Kinase-like_dom_sf"/>
</dbReference>
<dbReference type="InterPro" id="IPR000719">
    <property type="entry name" value="Prot_kinase_dom"/>
</dbReference>
<dbReference type="InterPro" id="IPR017441">
    <property type="entry name" value="Protein_kinase_ATP_BS"/>
</dbReference>
<dbReference type="InterPro" id="IPR008271">
    <property type="entry name" value="Ser/Thr_kinase_AS"/>
</dbReference>
<dbReference type="PANTHER" id="PTHR24350">
    <property type="entry name" value="SERINE/THREONINE-PROTEIN KINASE IAL-RELATED"/>
    <property type="match status" value="1"/>
</dbReference>
<dbReference type="Pfam" id="PF00069">
    <property type="entry name" value="Pkinase"/>
    <property type="match status" value="1"/>
</dbReference>
<dbReference type="PIRSF" id="PIRSF000654">
    <property type="entry name" value="Integrin-linked_kinase"/>
    <property type="match status" value="1"/>
</dbReference>
<dbReference type="SMART" id="SM00220">
    <property type="entry name" value="S_TKc"/>
    <property type="match status" value="1"/>
</dbReference>
<dbReference type="SUPFAM" id="SSF56112">
    <property type="entry name" value="Protein kinase-like (PK-like)"/>
    <property type="match status" value="1"/>
</dbReference>
<dbReference type="PROSITE" id="PS00107">
    <property type="entry name" value="PROTEIN_KINASE_ATP"/>
    <property type="match status" value="1"/>
</dbReference>
<dbReference type="PROSITE" id="PS50011">
    <property type="entry name" value="PROTEIN_KINASE_DOM"/>
    <property type="match status" value="1"/>
</dbReference>
<dbReference type="PROSITE" id="PS00108">
    <property type="entry name" value="PROTEIN_KINASE_ST"/>
    <property type="match status" value="1"/>
</dbReference>
<sequence>MENKPQILQTKSKNTPNKGGKLSINDFEIGRPLGKGKFGSVYLARTKTGHFHCAIKVLFKSQLISGGVEHQLEREIEIQSHLQHPNIIRLYNYFWDAKKIYLILEYAPGGEMYKQLTTQKRFTEAMAGKYMYEIADALSYCHRKNVIHRDIKPENLLIGAQGELKIGDFGWSVHAPSNKRQTMCGTMDYLPPEMVNGNSHSDAVDLWAIGVLCYEFLVGKPPFEHENQADTYSAIKAGRFTYPDFVKKGARDLIGKLLVVDPRRRCSLQEVKDHYWVTSMLDSCRRAAEKQKAERAASLRDH</sequence>
<gene>
    <name type="primary">air-2</name>
    <name type="ORF">CBG04030</name>
</gene>
<evidence type="ECO:0000250" key="1"/>
<evidence type="ECO:0000255" key="2">
    <source>
        <dbReference type="PROSITE-ProRule" id="PRU00159"/>
    </source>
</evidence>
<evidence type="ECO:0000255" key="3">
    <source>
        <dbReference type="PROSITE-ProRule" id="PRU10027"/>
    </source>
</evidence>
<evidence type="ECO:0000256" key="4">
    <source>
        <dbReference type="SAM" id="MobiDB-lite"/>
    </source>
</evidence>